<keyword id="KW-0067">ATP-binding</keyword>
<keyword id="KW-0378">Hydrolase</keyword>
<keyword id="KW-0547">Nucleotide-binding</keyword>
<protein>
    <recommendedName>
        <fullName evidence="1">5-oxoprolinase subunit A</fullName>
        <shortName evidence="1">5-OPase subunit A</shortName>
        <ecNumber evidence="1">3.5.2.9</ecNumber>
    </recommendedName>
    <alternativeName>
        <fullName evidence="1">5-oxoprolinase (ATP-hydrolyzing) subunit A</fullName>
    </alternativeName>
</protein>
<reference key="1">
    <citation type="submission" date="2007-06" db="EMBL/GenBank/DDBJ databases">
        <title>Complete sequence of chromosome of Staphylococcus aureus subsp. aureus JH1.</title>
        <authorList>
            <consortium name="US DOE Joint Genome Institute"/>
            <person name="Copeland A."/>
            <person name="Lucas S."/>
            <person name="Lapidus A."/>
            <person name="Barry K."/>
            <person name="Detter J.C."/>
            <person name="Glavina del Rio T."/>
            <person name="Hammon N."/>
            <person name="Israni S."/>
            <person name="Dalin E."/>
            <person name="Tice H."/>
            <person name="Pitluck S."/>
            <person name="Chain P."/>
            <person name="Malfatti S."/>
            <person name="Shin M."/>
            <person name="Vergez L."/>
            <person name="Schmutz J."/>
            <person name="Larimer F."/>
            <person name="Land M."/>
            <person name="Hauser L."/>
            <person name="Kyrpides N."/>
            <person name="Ivanova N."/>
            <person name="Tomasz A."/>
            <person name="Richardson P."/>
        </authorList>
    </citation>
    <scope>NUCLEOTIDE SEQUENCE [LARGE SCALE GENOMIC DNA]</scope>
    <source>
        <strain>JH1</strain>
    </source>
</reference>
<gene>
    <name evidence="1" type="primary">pxpA</name>
    <name type="ordered locus">SaurJH1_1696</name>
</gene>
<proteinExistence type="inferred from homology"/>
<accession>A6U274</accession>
<sequence>MRVDLNCDLGEAFGNYSFGGDHQIIPLITSANVACGFHAGDENVMNETVKLAKAHNVAVGAHPGLPDLKGFGRRNIDISNDEIYNLMIYQLGALQGFCRIHQLKINHVKPHGALYQMGAKDREIANVIAQAVYDFDPSLVLVGLANSYLISEAKNVGLITASEVFADRRYEDDGQLVSRKESDAVITDTDEALKQVLKMVKENKVISKNNKEVTLQADTICVHGDGEHALLFVSKIREILMKEGIDIQSL</sequence>
<comment type="function">
    <text evidence="1">Catalyzes the cleavage of 5-oxoproline to form L-glutamate coupled to the hydrolysis of ATP to ADP and inorganic phosphate.</text>
</comment>
<comment type="catalytic activity">
    <reaction evidence="1">
        <text>5-oxo-L-proline + ATP + 2 H2O = L-glutamate + ADP + phosphate + H(+)</text>
        <dbReference type="Rhea" id="RHEA:10348"/>
        <dbReference type="ChEBI" id="CHEBI:15377"/>
        <dbReference type="ChEBI" id="CHEBI:15378"/>
        <dbReference type="ChEBI" id="CHEBI:29985"/>
        <dbReference type="ChEBI" id="CHEBI:30616"/>
        <dbReference type="ChEBI" id="CHEBI:43474"/>
        <dbReference type="ChEBI" id="CHEBI:58402"/>
        <dbReference type="ChEBI" id="CHEBI:456216"/>
        <dbReference type="EC" id="3.5.2.9"/>
    </reaction>
</comment>
<comment type="subunit">
    <text evidence="1">Forms a complex composed of PxpA, PxpB and PxpC.</text>
</comment>
<comment type="similarity">
    <text evidence="1">Belongs to the LamB/PxpA family.</text>
</comment>
<name>PXPA_STAA2</name>
<dbReference type="EC" id="3.5.2.9" evidence="1"/>
<dbReference type="EMBL" id="CP000736">
    <property type="protein sequence ID" value="ABR52542.1"/>
    <property type="molecule type" value="Genomic_DNA"/>
</dbReference>
<dbReference type="SMR" id="A6U274"/>
<dbReference type="KEGG" id="sah:SaurJH1_1696"/>
<dbReference type="HOGENOM" id="CLU_069535_0_0_9"/>
<dbReference type="GO" id="GO:0017168">
    <property type="term" value="F:5-oxoprolinase (ATP-hydrolyzing) activity"/>
    <property type="evidence" value="ECO:0007669"/>
    <property type="project" value="UniProtKB-UniRule"/>
</dbReference>
<dbReference type="GO" id="GO:0005524">
    <property type="term" value="F:ATP binding"/>
    <property type="evidence" value="ECO:0007669"/>
    <property type="project" value="UniProtKB-UniRule"/>
</dbReference>
<dbReference type="GO" id="GO:0005975">
    <property type="term" value="P:carbohydrate metabolic process"/>
    <property type="evidence" value="ECO:0007669"/>
    <property type="project" value="InterPro"/>
</dbReference>
<dbReference type="CDD" id="cd10787">
    <property type="entry name" value="LamB_YcsF_like"/>
    <property type="match status" value="1"/>
</dbReference>
<dbReference type="Gene3D" id="3.20.20.370">
    <property type="entry name" value="Glycoside hydrolase/deacetylase"/>
    <property type="match status" value="1"/>
</dbReference>
<dbReference type="HAMAP" id="MF_00691">
    <property type="entry name" value="PxpA"/>
    <property type="match status" value="1"/>
</dbReference>
<dbReference type="InterPro" id="IPR011330">
    <property type="entry name" value="Glyco_hydro/deAcase_b/a-brl"/>
</dbReference>
<dbReference type="InterPro" id="IPR005501">
    <property type="entry name" value="LamB/YcsF/PxpA-like"/>
</dbReference>
<dbReference type="NCBIfam" id="NF003813">
    <property type="entry name" value="PRK05406.1-2"/>
    <property type="match status" value="1"/>
</dbReference>
<dbReference type="NCBIfam" id="NF003814">
    <property type="entry name" value="PRK05406.1-3"/>
    <property type="match status" value="1"/>
</dbReference>
<dbReference type="NCBIfam" id="NF003816">
    <property type="entry name" value="PRK05406.1-5"/>
    <property type="match status" value="1"/>
</dbReference>
<dbReference type="PANTHER" id="PTHR30292:SF0">
    <property type="entry name" value="5-OXOPROLINASE SUBUNIT A"/>
    <property type="match status" value="1"/>
</dbReference>
<dbReference type="PANTHER" id="PTHR30292">
    <property type="entry name" value="UNCHARACTERIZED PROTEIN YBGL-RELATED"/>
    <property type="match status" value="1"/>
</dbReference>
<dbReference type="Pfam" id="PF03746">
    <property type="entry name" value="LamB_YcsF"/>
    <property type="match status" value="1"/>
</dbReference>
<dbReference type="SUPFAM" id="SSF88713">
    <property type="entry name" value="Glycoside hydrolase/deacetylase"/>
    <property type="match status" value="1"/>
</dbReference>
<feature type="chain" id="PRO_1000083124" description="5-oxoprolinase subunit A">
    <location>
        <begin position="1"/>
        <end position="250"/>
    </location>
</feature>
<evidence type="ECO:0000255" key="1">
    <source>
        <dbReference type="HAMAP-Rule" id="MF_00691"/>
    </source>
</evidence>
<organism>
    <name type="scientific">Staphylococcus aureus (strain JH1)</name>
    <dbReference type="NCBI Taxonomy" id="359787"/>
    <lineage>
        <taxon>Bacteria</taxon>
        <taxon>Bacillati</taxon>
        <taxon>Bacillota</taxon>
        <taxon>Bacilli</taxon>
        <taxon>Bacillales</taxon>
        <taxon>Staphylococcaceae</taxon>
        <taxon>Staphylococcus</taxon>
    </lineage>
</organism>